<proteinExistence type="evidence at protein level"/>
<feature type="chain" id="PRO_0000119775" description="Geranylgeranyl transferase type-1 subunit beta">
    <location>
        <begin position="1"/>
        <end position="376"/>
    </location>
</feature>
<feature type="repeat" description="PFTB 1" evidence="2">
    <location>
        <begin position="128"/>
        <end position="179"/>
    </location>
</feature>
<feature type="repeat" description="PFTB 2" evidence="2">
    <location>
        <begin position="192"/>
        <end position="231"/>
    </location>
</feature>
<feature type="repeat" description="PFTB 3" evidence="2">
    <location>
        <begin position="259"/>
        <end position="301"/>
    </location>
</feature>
<feature type="repeat" description="PFTB 4" evidence="2">
    <location>
        <begin position="310"/>
        <end position="353"/>
    </location>
</feature>
<feature type="binding site" evidence="1">
    <location>
        <begin position="216"/>
        <end position="218"/>
    </location>
    <ligand>
        <name>geranylgeranyl diphosphate</name>
        <dbReference type="ChEBI" id="CHEBI:57533"/>
    </ligand>
</feature>
<feature type="binding site" evidence="1">
    <location>
        <begin position="280"/>
        <end position="283"/>
    </location>
    <ligand>
        <name>geranylgeranyl diphosphate</name>
        <dbReference type="ChEBI" id="CHEBI:57533"/>
    </ligand>
</feature>
<feature type="binding site" evidence="1">
    <location>
        <position position="286"/>
    </location>
    <ligand>
        <name>Zn(2+)</name>
        <dbReference type="ChEBI" id="CHEBI:29105"/>
        <note>catalytic</note>
    </ligand>
</feature>
<feature type="binding site" evidence="1">
    <location>
        <position position="288"/>
    </location>
    <ligand>
        <name>Zn(2+)</name>
        <dbReference type="ChEBI" id="CHEBI:29105"/>
        <note>catalytic</note>
    </ligand>
</feature>
<feature type="binding site" evidence="1">
    <location>
        <begin position="289"/>
        <end position="292"/>
    </location>
    <ligand>
        <name>geranylgeranyl diphosphate</name>
        <dbReference type="ChEBI" id="CHEBI:57533"/>
    </ligand>
</feature>
<feature type="binding site" evidence="1">
    <location>
        <position position="341"/>
    </location>
    <ligand>
        <name>Zn(2+)</name>
        <dbReference type="ChEBI" id="CHEBI:29105"/>
        <note>catalytic</note>
    </ligand>
</feature>
<feature type="mutagenesis site" description="In cdc43-2; severely impairs the geranylgeranyl transferase activity." evidence="11">
    <original>S</original>
    <variation>F</variation>
    <location>
        <position position="85"/>
    </location>
</feature>
<feature type="mutagenesis site" description="In cdc43-3; severely impairs the geranylgeranyl transferase activity." evidence="11">
    <original>C</original>
    <variation>Y</variation>
    <location>
        <position position="138"/>
    </location>
</feature>
<feature type="mutagenesis site" description="Increases KM for isoprenoid substrate 29-fold." evidence="3">
    <original>R</original>
    <variation>I</variation>
    <location>
        <position position="166"/>
    </location>
</feature>
<feature type="mutagenesis site" description="In cdc43-4,5,6; severely impairs the geranylgeranyl transferase activity." evidence="11">
    <original>A</original>
    <variation>V</variation>
    <variation>T</variation>
    <location>
        <position position="171"/>
    </location>
</feature>
<feature type="mutagenesis site" description="Increases KM for peptide substrate 12-fold." evidence="3">
    <original>H</original>
    <variation>D</variation>
    <location>
        <position position="216"/>
    </location>
</feature>
<feature type="mutagenesis site" description="In cdc43-7; severely impairs the geranylgeranyl transferase activity." evidence="11">
    <original>R</original>
    <variation>C</variation>
    <location>
        <position position="280"/>
    </location>
</feature>
<feature type="mutagenesis site" description="Decreases catalytic activity 2-fold, but retains substrate binding properties." evidence="3">
    <original>N</original>
    <variation>A</variation>
    <location>
        <position position="282"/>
    </location>
</feature>
<feature type="mutagenesis site" description="In cal1-1; completely abolishes geranylgeranyl transferase activity. Displays a defect in nuclear division and bud formation." evidence="8 10 11">
    <original>G</original>
    <variation>S</variation>
    <location>
        <position position="328"/>
    </location>
</feature>
<reference key="1">
    <citation type="journal article" date="1990" name="Gene">
        <title>Isolation and sequence analysis of CDC43, a gene involved in the control of cell polarity in Saccharomyces cerevisiae.</title>
        <authorList>
            <person name="Johnson D.I."/>
            <person name="O'Brien J.M."/>
            <person name="Jacobs C.W."/>
        </authorList>
    </citation>
    <scope>PRELIMINARY NUCLEOTIDE SEQUENCE [GENOMIC DNA]</scope>
</reference>
<reference key="2">
    <citation type="journal article" date="1991" name="Gene">
        <title>Isolation and sequence analysis of CDC43, a gene involved in the control of cell polarity in Saccharomyces cerevisiae.</title>
        <authorList>
            <person name="Johnson D.I."/>
            <person name="O'Brien J.M."/>
            <person name="Jacobs C.W."/>
        </authorList>
    </citation>
    <scope>SEQUENCE REVISION</scope>
</reference>
<reference key="3">
    <citation type="journal article" date="1991" name="J. Biol. Chem.">
        <title>Yeast CAL1 is a structural and functional homologue to the DPR1 (RAM) gene involved in ras processing.</title>
        <authorList>
            <person name="Ohya Y."/>
            <person name="Goebl M."/>
            <person name="Goodman L.E."/>
            <person name="Petersen-Bjoern S."/>
            <person name="Friesen J.D."/>
            <person name="Tamanoi F."/>
            <person name="Anraku Y."/>
        </authorList>
    </citation>
    <scope>NUCLEOTIDE SEQUENCE [GENOMIC DNA]</scope>
    <source>
        <strain>A5-8-1A</strain>
    </source>
</reference>
<reference key="4">
    <citation type="journal article" date="1995" name="Yeast">
        <title>DNA sequence analysis of a 35 kb segment from Saccharomyces cerevisiae chromosome VII reveals 19 open reading frames including RAD54, ACE1/CUP2, PMR1, RCK1, AMS1 and CAL1/CDC43.</title>
        <authorList>
            <person name="James C.M."/>
            <person name="Indge K.J."/>
            <person name="Oliver S.G."/>
        </authorList>
    </citation>
    <scope>NUCLEOTIDE SEQUENCE [GENOMIC DNA]</scope>
</reference>
<reference key="5">
    <citation type="journal article" date="1997" name="Nature">
        <title>The nucleotide sequence of Saccharomyces cerevisiae chromosome VII.</title>
        <authorList>
            <person name="Tettelin H."/>
            <person name="Agostoni-Carbone M.L."/>
            <person name="Albermann K."/>
            <person name="Albers M."/>
            <person name="Arroyo J."/>
            <person name="Backes U."/>
            <person name="Barreiros T."/>
            <person name="Bertani I."/>
            <person name="Bjourson A.J."/>
            <person name="Brueckner M."/>
            <person name="Bruschi C.V."/>
            <person name="Carignani G."/>
            <person name="Castagnoli L."/>
            <person name="Cerdan E."/>
            <person name="Clemente M.L."/>
            <person name="Coblenz A."/>
            <person name="Coglievina M."/>
            <person name="Coissac E."/>
            <person name="Defoor E."/>
            <person name="Del Bino S."/>
            <person name="Delius H."/>
            <person name="Delneri D."/>
            <person name="de Wergifosse P."/>
            <person name="Dujon B."/>
            <person name="Durand P."/>
            <person name="Entian K.-D."/>
            <person name="Eraso P."/>
            <person name="Escribano V."/>
            <person name="Fabiani L."/>
            <person name="Fartmann B."/>
            <person name="Feroli F."/>
            <person name="Feuermann M."/>
            <person name="Frontali L."/>
            <person name="Garcia-Gonzalez M."/>
            <person name="Garcia-Saez M.I."/>
            <person name="Goffeau A."/>
            <person name="Guerreiro P."/>
            <person name="Hani J."/>
            <person name="Hansen M."/>
            <person name="Hebling U."/>
            <person name="Hernandez K."/>
            <person name="Heumann K."/>
            <person name="Hilger F."/>
            <person name="Hofmann B."/>
            <person name="Indge K.J."/>
            <person name="James C.M."/>
            <person name="Klima R."/>
            <person name="Koetter P."/>
            <person name="Kramer B."/>
            <person name="Kramer W."/>
            <person name="Lauquin G."/>
            <person name="Leuther H."/>
            <person name="Louis E.J."/>
            <person name="Maillier E."/>
            <person name="Marconi A."/>
            <person name="Martegani E."/>
            <person name="Mazon M.J."/>
            <person name="Mazzoni C."/>
            <person name="McReynolds A.D.K."/>
            <person name="Melchioretto P."/>
            <person name="Mewes H.-W."/>
            <person name="Minenkova O."/>
            <person name="Mueller-Auer S."/>
            <person name="Nawrocki A."/>
            <person name="Netter P."/>
            <person name="Neu R."/>
            <person name="Nombela C."/>
            <person name="Oliver S.G."/>
            <person name="Panzeri L."/>
            <person name="Paoluzi S."/>
            <person name="Plevani P."/>
            <person name="Portetelle D."/>
            <person name="Portillo F."/>
            <person name="Potier S."/>
            <person name="Purnelle B."/>
            <person name="Rieger M."/>
            <person name="Riles L."/>
            <person name="Rinaldi T."/>
            <person name="Robben J."/>
            <person name="Rodrigues-Pousada C."/>
            <person name="Rodriguez-Belmonte E."/>
            <person name="Rodriguez-Torres A.M."/>
            <person name="Rose M."/>
            <person name="Ruzzi M."/>
            <person name="Saliola M."/>
            <person name="Sanchez-Perez M."/>
            <person name="Schaefer B."/>
            <person name="Schaefer M."/>
            <person name="Scharfe M."/>
            <person name="Schmidheini T."/>
            <person name="Schreer A."/>
            <person name="Skala J."/>
            <person name="Souciet J.-L."/>
            <person name="Steensma H.Y."/>
            <person name="Talla E."/>
            <person name="Thierry A."/>
            <person name="Vandenbol M."/>
            <person name="van der Aart Q.J.M."/>
            <person name="Van Dyck L."/>
            <person name="Vanoni M."/>
            <person name="Verhasselt P."/>
            <person name="Voet M."/>
            <person name="Volckaert G."/>
            <person name="Wambutt R."/>
            <person name="Watson M.D."/>
            <person name="Weber N."/>
            <person name="Wedler E."/>
            <person name="Wedler H."/>
            <person name="Wipfli P."/>
            <person name="Wolf K."/>
            <person name="Wright L.F."/>
            <person name="Zaccaria P."/>
            <person name="Zimmermann M."/>
            <person name="Zollner A."/>
            <person name="Kleine K."/>
        </authorList>
    </citation>
    <scope>NUCLEOTIDE SEQUENCE [LARGE SCALE GENOMIC DNA]</scope>
    <source>
        <strain>ATCC 204508 / S288c</strain>
    </source>
</reference>
<reference key="6">
    <citation type="journal article" date="2014" name="G3 (Bethesda)">
        <title>The reference genome sequence of Saccharomyces cerevisiae: Then and now.</title>
        <authorList>
            <person name="Engel S.R."/>
            <person name="Dietrich F.S."/>
            <person name="Fisk D.G."/>
            <person name="Binkley G."/>
            <person name="Balakrishnan R."/>
            <person name="Costanzo M.C."/>
            <person name="Dwight S.S."/>
            <person name="Hitz B.C."/>
            <person name="Karra K."/>
            <person name="Nash R.S."/>
            <person name="Weng S."/>
            <person name="Wong E.D."/>
            <person name="Lloyd P."/>
            <person name="Skrzypek M.S."/>
            <person name="Miyasato S.R."/>
            <person name="Simison M."/>
            <person name="Cherry J.M."/>
        </authorList>
    </citation>
    <scope>GENOME REANNOTATION</scope>
    <source>
        <strain>ATCC 204508 / S288c</strain>
    </source>
</reference>
<reference key="7">
    <citation type="journal article" date="1984" name="Mol. Gen. Genet.">
        <title>Genetic study of the role of calcium ions in the cell division cycle of Saccharomyces cerevisiae: a calcium-dependent mutant and its trifluoperazine-dependent pseudorevertants.</title>
        <authorList>
            <person name="Ohya Y."/>
            <person name="Ohsumi Y."/>
            <person name="Anraku Y."/>
        </authorList>
    </citation>
    <scope>MUTAGENESIS OF GLY-328</scope>
</reference>
<reference key="8">
    <citation type="journal article" date="1991" name="J. Biol. Chem.">
        <title>Structural homology among mammalian and Saccharomyces cerevisiae isoprenyl-protein transferases.</title>
        <authorList>
            <person name="Kohl N.E."/>
            <person name="Diehl R.E."/>
            <person name="Schaber M.D."/>
            <person name="Rands E."/>
            <person name="Soderman D.D."/>
            <person name="He B."/>
            <person name="Moores S.L."/>
            <person name="Pompliano D.L."/>
            <person name="Ferro-Novick S."/>
            <person name="Powers S."/>
            <person name="Thomas K.A."/>
            <person name="Gibbs J.B."/>
        </authorList>
    </citation>
    <scope>SUBUNIT</scope>
</reference>
<reference key="9">
    <citation type="journal article" date="1991" name="Proc. Natl. Acad. Sci. U.S.A.">
        <title>Protein geranylgeranyltransferase of Saccharomyces cerevisiae is specific for Cys-Xaa-Xaa-Leu motif proteins and requires the CDC43 gene product but not the DPR1 gene product.</title>
        <authorList>
            <person name="Finegold A.A."/>
            <person name="Johnson D.I."/>
            <person name="Farnsworth C.C."/>
            <person name="Gelb M.H."/>
            <person name="Judd S.R."/>
            <person name="Glomset J.A."/>
            <person name="Tamanoi F."/>
        </authorList>
    </citation>
    <scope>FUNCTION</scope>
</reference>
<reference key="10">
    <citation type="journal article" date="1992" name="J. Biol. Chem.">
        <title>CDC43 and RAM2 encode the polypeptide subunits of a yeast type I protein geranylgeranyltransferase.</title>
        <authorList>
            <person name="Mayer M.L."/>
            <person name="Caplin B.E."/>
            <person name="Marshall M.S."/>
        </authorList>
    </citation>
    <scope>FUNCTION</scope>
    <scope>SUBUNIT</scope>
    <scope>COFACTOR</scope>
    <scope>BIOPHYSICOCHEMICAL PROPERTIES</scope>
</reference>
<reference key="11">
    <citation type="journal article" date="1993" name="J. Biol. Chem.">
        <authorList>
            <person name="Mayer M.L."/>
            <person name="Caplin B.E."/>
            <person name="Marshall M.S."/>
        </authorList>
    </citation>
    <scope>ERRATUM OF PUBMED:1400380</scope>
</reference>
<reference key="12">
    <citation type="journal article" date="1993" name="Biochemistry">
        <title>Characterization of recombinant human farnesyl-protein transferase: cloning, expression, farnesyl diphosphate binding, and functional homology with yeast prenyl-protein transferases.</title>
        <authorList>
            <person name="Omer C.A."/>
            <person name="Kral A.M."/>
            <person name="Diehl R.E."/>
            <person name="Prendergast G.C."/>
            <person name="Powers S."/>
            <person name="Allen C.M."/>
            <person name="Gibbs J.B."/>
            <person name="Kohl N.E."/>
        </authorList>
    </citation>
    <scope>MUTAGENESIS OF GLY-328</scope>
</reference>
<reference key="13">
    <citation type="journal article" date="1995" name="Arch. Biochem. Biophys.">
        <title>Yeast protein geranylgeranyltransferase type-I: overproduction, purification, and characterization.</title>
        <authorList>
            <person name="Stirtan W.G."/>
            <person name="Poulter C.D."/>
        </authorList>
    </citation>
    <scope>SUBUNIT</scope>
    <scope>CATALYTIC ACTIVITY</scope>
    <scope>COFACTOR</scope>
    <scope>BIOPHYSICOCHEMICAL PROPERTIES</scope>
</reference>
<reference key="14">
    <citation type="journal article" date="1996" name="Mol. Gen. Genet.">
        <title>Mutational analysis of the beta-subunit of yeast geranylgeranyl transferase I.</title>
        <authorList>
            <person name="Ohya Y."/>
            <person name="Caplin B.E."/>
            <person name="Qadota H."/>
            <person name="Tibbetts M.F."/>
            <person name="Anraku Y."/>
            <person name="Pringle J.R."/>
            <person name="Marshall M.S."/>
        </authorList>
    </citation>
    <scope>MUTAGENESIS OF SER-85; CYS-138; ALA-171 AND ARG-280</scope>
</reference>
<reference key="15">
    <citation type="journal article" date="1997" name="Biochemistry">
        <title>Yeast protein geranylgeranyltransferase type-I: steady-state kinetics and substrate binding.</title>
        <authorList>
            <person name="Stirtan W.G."/>
            <person name="Poulter C.D."/>
        </authorList>
    </citation>
    <scope>CATALYTIC ACTIVITY</scope>
    <scope>BIOPHYSICOCHEMICAL PROPERTIES</scope>
</reference>
<reference key="16">
    <citation type="journal article" date="1999" name="Eur. J. Biochem.">
        <title>Active site determination of yeast geranylgeranyl protein transferase type I expressed in Escherichia coli.</title>
        <authorList>
            <person name="Kim H."/>
            <person name="Yang C.H."/>
        </authorList>
    </citation>
    <scope>BIOPHYSICOCHEMICAL PROPERTIES</scope>
    <scope>MUTAGENESIS OF ARG-166; HIS-216 AND ASN-282</scope>
</reference>
<reference key="17">
    <citation type="journal article" date="2003" name="Nature">
        <title>Global analysis of protein localization in budding yeast.</title>
        <authorList>
            <person name="Huh W.-K."/>
            <person name="Falvo J.V."/>
            <person name="Gerke L.C."/>
            <person name="Carroll A.S."/>
            <person name="Howson R.W."/>
            <person name="Weissman J.S."/>
            <person name="O'Shea E.K."/>
        </authorList>
    </citation>
    <scope>SUBCELLULAR LOCATION [LARGE SCALE ANALYSIS]</scope>
</reference>
<reference key="18">
    <citation type="journal article" date="2003" name="Nature">
        <title>Global analysis of protein expression in yeast.</title>
        <authorList>
            <person name="Ghaemmaghami S."/>
            <person name="Huh W.-K."/>
            <person name="Bower K."/>
            <person name="Howson R.W."/>
            <person name="Belle A."/>
            <person name="Dephoure N."/>
            <person name="O'Shea E.K."/>
            <person name="Weissman J.S."/>
        </authorList>
    </citation>
    <scope>LEVEL OF PROTEIN EXPRESSION [LARGE SCALE ANALYSIS]</scope>
</reference>
<keyword id="KW-0963">Cytoplasm</keyword>
<keyword id="KW-0460">Magnesium</keyword>
<keyword id="KW-0479">Metal-binding</keyword>
<keyword id="KW-0637">Prenyltransferase</keyword>
<keyword id="KW-1185">Reference proteome</keyword>
<keyword id="KW-0677">Repeat</keyword>
<keyword id="KW-0808">Transferase</keyword>
<keyword id="KW-0862">Zinc</keyword>
<accession>P18898</accession>
<accession>D6VTZ6</accession>
<organism>
    <name type="scientific">Saccharomyces cerevisiae (strain ATCC 204508 / S288c)</name>
    <name type="common">Baker's yeast</name>
    <dbReference type="NCBI Taxonomy" id="559292"/>
    <lineage>
        <taxon>Eukaryota</taxon>
        <taxon>Fungi</taxon>
        <taxon>Dikarya</taxon>
        <taxon>Ascomycota</taxon>
        <taxon>Saccharomycotina</taxon>
        <taxon>Saccharomycetes</taxon>
        <taxon>Saccharomycetales</taxon>
        <taxon>Saccharomycetaceae</taxon>
        <taxon>Saccharomyces</taxon>
    </lineage>
</organism>
<gene>
    <name type="primary">CDC43</name>
    <name type="synonym">CAL1</name>
    <name type="ordered locus">YGL155W</name>
    <name type="ORF">G1864</name>
</gene>
<dbReference type="EC" id="2.5.1.59" evidence="4 9 12"/>
<dbReference type="EMBL" id="M31114">
    <property type="protein sequence ID" value="AAA34481.1"/>
    <property type="molecule type" value="Genomic_DNA"/>
</dbReference>
<dbReference type="EMBL" id="M74109">
    <property type="protein sequence ID" value="AAA34464.1"/>
    <property type="molecule type" value="Genomic_DNA"/>
</dbReference>
<dbReference type="EMBL" id="Z48618">
    <property type="status" value="NOT_ANNOTATED_CDS"/>
    <property type="molecule type" value="Genomic_DNA"/>
</dbReference>
<dbReference type="EMBL" id="Z72677">
    <property type="protein sequence ID" value="CAA96867.1"/>
    <property type="molecule type" value="Genomic_DNA"/>
</dbReference>
<dbReference type="EMBL" id="BK006941">
    <property type="protein sequence ID" value="DAA07957.1"/>
    <property type="molecule type" value="Genomic_DNA"/>
</dbReference>
<dbReference type="PIR" id="A40875">
    <property type="entry name" value="RGBY43"/>
</dbReference>
<dbReference type="RefSeq" id="NP_011360.1">
    <property type="nucleotide sequence ID" value="NM_001181020.1"/>
</dbReference>
<dbReference type="SMR" id="P18898"/>
<dbReference type="BioGRID" id="33099">
    <property type="interactions" value="235"/>
</dbReference>
<dbReference type="ComplexPortal" id="CPX-1635">
    <property type="entry name" value="Protein geranylgeranyltransferase type I complex"/>
</dbReference>
<dbReference type="DIP" id="DIP-1232N"/>
<dbReference type="FunCoup" id="P18898">
    <property type="interactions" value="11"/>
</dbReference>
<dbReference type="IntAct" id="P18898">
    <property type="interactions" value="5"/>
</dbReference>
<dbReference type="MINT" id="P18898"/>
<dbReference type="STRING" id="4932.YGL155W"/>
<dbReference type="PaxDb" id="4932-YGL155W"/>
<dbReference type="PeptideAtlas" id="P18898"/>
<dbReference type="EnsemblFungi" id="YGL155W_mRNA">
    <property type="protein sequence ID" value="YGL155W"/>
    <property type="gene ID" value="YGL155W"/>
</dbReference>
<dbReference type="GeneID" id="852722"/>
<dbReference type="KEGG" id="sce:YGL155W"/>
<dbReference type="AGR" id="SGD:S000003123"/>
<dbReference type="SGD" id="S000003123">
    <property type="gene designation" value="CDC43"/>
</dbReference>
<dbReference type="VEuPathDB" id="FungiDB:YGL155W"/>
<dbReference type="eggNOG" id="KOG0367">
    <property type="taxonomic scope" value="Eukaryota"/>
</dbReference>
<dbReference type="GeneTree" id="ENSGT00950000183128"/>
<dbReference type="HOGENOM" id="CLU_028946_2_1_1"/>
<dbReference type="InParanoid" id="P18898"/>
<dbReference type="OMA" id="CHKTFLP"/>
<dbReference type="OrthoDB" id="24893at2759"/>
<dbReference type="BioCyc" id="YEAST:YGL155W-MONOMER"/>
<dbReference type="BioGRID-ORCS" id="852722">
    <property type="hits" value="2 hits in 10 CRISPR screens"/>
</dbReference>
<dbReference type="PRO" id="PR:P18898"/>
<dbReference type="Proteomes" id="UP000002311">
    <property type="component" value="Chromosome VII"/>
</dbReference>
<dbReference type="RNAct" id="P18898">
    <property type="molecule type" value="protein"/>
</dbReference>
<dbReference type="GO" id="GO:0005953">
    <property type="term" value="C:CAAX-protein geranylgeranyltransferase complex"/>
    <property type="evidence" value="ECO:0000314"/>
    <property type="project" value="SGD"/>
</dbReference>
<dbReference type="GO" id="GO:0005737">
    <property type="term" value="C:cytoplasm"/>
    <property type="evidence" value="ECO:0007669"/>
    <property type="project" value="UniProtKB-SubCell"/>
</dbReference>
<dbReference type="GO" id="GO:0004662">
    <property type="term" value="F:CAAX-protein geranylgeranyltransferase activity"/>
    <property type="evidence" value="ECO:0000314"/>
    <property type="project" value="SGD"/>
</dbReference>
<dbReference type="GO" id="GO:0008270">
    <property type="term" value="F:zinc ion binding"/>
    <property type="evidence" value="ECO:0000250"/>
    <property type="project" value="UniProtKB"/>
</dbReference>
<dbReference type="CDD" id="cd02895">
    <property type="entry name" value="GGTase-I"/>
    <property type="match status" value="1"/>
</dbReference>
<dbReference type="FunFam" id="1.50.10.20:FF:000034">
    <property type="entry name" value="CAAX geranylgeranyltransferase beta subunit"/>
    <property type="match status" value="1"/>
</dbReference>
<dbReference type="Gene3D" id="1.50.10.20">
    <property type="match status" value="1"/>
</dbReference>
<dbReference type="InterPro" id="IPR041960">
    <property type="entry name" value="GGTase_I_beta"/>
</dbReference>
<dbReference type="InterPro" id="IPR045089">
    <property type="entry name" value="PGGT1B-like"/>
</dbReference>
<dbReference type="InterPro" id="IPR001330">
    <property type="entry name" value="Prenyltrans"/>
</dbReference>
<dbReference type="InterPro" id="IPR008930">
    <property type="entry name" value="Terpenoid_cyclase/PrenylTrfase"/>
</dbReference>
<dbReference type="PANTHER" id="PTHR11774">
    <property type="entry name" value="GERANYLGERANYL TRANSFERASE TYPE BETA SUBUNIT"/>
    <property type="match status" value="1"/>
</dbReference>
<dbReference type="PANTHER" id="PTHR11774:SF4">
    <property type="entry name" value="GERANYLGERANYL TRANSFERASE TYPE-1 SUBUNIT BETA"/>
    <property type="match status" value="1"/>
</dbReference>
<dbReference type="Pfam" id="PF00432">
    <property type="entry name" value="Prenyltrans"/>
    <property type="match status" value="1"/>
</dbReference>
<dbReference type="SUPFAM" id="SSF48239">
    <property type="entry name" value="Terpenoid cyclases/Protein prenyltransferases"/>
    <property type="match status" value="1"/>
</dbReference>
<comment type="function">
    <text evidence="3 4 7 12">Catalyzes the transfer of a geranyl-geranyl moiety from geranyl-geranyl diphosphate to proteins having the C-terminal sequence Cys-Ile-Ile-Leu or Cys-Val-Leu-Leu. Acts, among other substrates, on Rho1 and Rho2 and CDC42 proteins. Participates in a RAS-like C-terminal modification of proteins involved in nuclear division and bud growth. It is involved in bud positioning and cell polarity (PubMed:1400380, PubMed:2034682). The beta subunit is responsible for isoprenoid and peptide-binding (PubMed:10491163, PubMed:9109664).</text>
</comment>
<comment type="catalytic activity">
    <reaction evidence="4 9 12">
        <text>geranylgeranyl diphosphate + L-cysteinyl-[protein] = S-geranylgeranyl-L-cysteinyl-[protein] + diphosphate</text>
        <dbReference type="Rhea" id="RHEA:21240"/>
        <dbReference type="Rhea" id="RHEA-COMP:10131"/>
        <dbReference type="Rhea" id="RHEA-COMP:11537"/>
        <dbReference type="ChEBI" id="CHEBI:29950"/>
        <dbReference type="ChEBI" id="CHEBI:33019"/>
        <dbReference type="ChEBI" id="CHEBI:57533"/>
        <dbReference type="ChEBI" id="CHEBI:86021"/>
        <dbReference type="EC" id="2.5.1.59"/>
    </reaction>
    <physiologicalReaction direction="left-to-right" evidence="4 9 12">
        <dbReference type="Rhea" id="RHEA:21241"/>
    </physiologicalReaction>
</comment>
<comment type="cofactor">
    <cofactor evidence="9">
        <name>Zn(2+)</name>
        <dbReference type="ChEBI" id="CHEBI:29105"/>
    </cofactor>
    <text evidence="1">Binds 1 zinc ion per subunit.</text>
</comment>
<comment type="cofactor">
    <cofactor evidence="4 9">
        <name>Mg(2+)</name>
        <dbReference type="ChEBI" id="CHEBI:18420"/>
    </cofactor>
</comment>
<comment type="biophysicochemical properties">
    <kinetics>
        <KM evidence="9">1 uM for geranylgeranyl diphosphate</KM>
        <KM evidence="12">0.86 uM for geranylgeranyl diphosphate</KM>
        <KM evidence="3">0.12 uM for geranylgeranyl diphosphate</KM>
        <KM evidence="9">2.4 uM for dansyl-GCIIL</KM>
        <KM evidence="12">1.6 uM for dansyl-GCIIL</KM>
        <KM evidence="3">0.68 uM for GST-CAIL</KM>
        <Vmax evidence="9">0.2 umol/min/mg enzyme</Vmax>
        <text evidence="3 12">kcat is 0.34 sec(-1) with dansyl-GCIIL as substrate (PubMed:9109664). kcat is 4.8 sec(-1) with GST-CAIL as substrate (PubMed:10491163).</text>
    </kinetics>
    <phDependence>
        <text evidence="4 9">Optimum pH is 7.5.</text>
    </phDependence>
</comment>
<comment type="subunit">
    <text evidence="4 14">Heterodimer of an alpha (RAM2) and a beta (CDC43) subunit.</text>
</comment>
<comment type="interaction">
    <interactant intactId="EBI-3961">
        <id>P18898</id>
    </interactant>
    <interactant intactId="EBI-14814">
        <id>P29703</id>
        <label>RAM2</label>
    </interactant>
    <organismsDiffer>false</organismsDiffer>
    <experiments>4</experiments>
</comment>
<comment type="subcellular location">
    <subcellularLocation>
        <location evidence="5">Cytoplasm</location>
    </subcellularLocation>
</comment>
<comment type="miscellaneous">
    <text evidence="6">Present with 3940 molecules/cell in log phase SD medium.</text>
</comment>
<comment type="similarity">
    <text evidence="13">Belongs to the protein prenyltransferase subunit beta family.</text>
</comment>
<protein>
    <recommendedName>
        <fullName>Geranylgeranyl transferase type-1 subunit beta</fullName>
        <shortName>GGTase-I-beta</shortName>
        <ecNumber evidence="4 9 12">2.5.1.59</ecNumber>
    </recommendedName>
    <alternativeName>
        <fullName>Cell division cycle protein 43</fullName>
    </alternativeName>
    <alternativeName>
        <fullName>Geranylgeranyl transferase type I subunit beta</fullName>
    </alternativeName>
    <alternativeName>
        <fullName>RAS proteins geranylgeranyltransferase subunit beta</fullName>
    </alternativeName>
    <alternativeName>
        <fullName>Type I protein geranyl-geranyltransferase subunit beta</fullName>
        <shortName>PGGTase I beta</shortName>
    </alternativeName>
</protein>
<sequence length="376" mass="42690">MCQATNGPSRVVTKKHRKFFERHLQLLPSSHQGHDVNRMAIIFYSISGLSIFDVNVSAKYGDHLGWMRKHYIKTVLDDTENTVISGFVGSLVMNIPHATTINLPNTLFALLSMIMLRDYEYFETILDKRSLARFVSKCQRPDRGSFVSCLDYKTNCGSSVDSDDLRFCYIAVAILYICGCRSKEDFDEYIDTEKLLGYIMSQQCYNGAFGAHNEPHSGYTSCALSTLALLSSLEKLSDKFKEDTITWLLHRQVSSHGCMKFESELNASYDQSDDGGFQGRENKFADTCYAFWCLNSLHLLTKDWKMLCQTELVTNYLLDRTQKTLTGGFSKNDEEDADLYHSCLGSAALALIEGKFNGELCIPQEIFNDFSKRCCF</sequence>
<evidence type="ECO:0000250" key="1">
    <source>
        <dbReference type="UniProtKB" id="P53610"/>
    </source>
</evidence>
<evidence type="ECO:0000255" key="2"/>
<evidence type="ECO:0000269" key="3">
    <source>
    </source>
</evidence>
<evidence type="ECO:0000269" key="4">
    <source>
    </source>
</evidence>
<evidence type="ECO:0000269" key="5">
    <source>
    </source>
</evidence>
<evidence type="ECO:0000269" key="6">
    <source>
    </source>
</evidence>
<evidence type="ECO:0000269" key="7">
    <source>
    </source>
</evidence>
<evidence type="ECO:0000269" key="8">
    <source>
    </source>
</evidence>
<evidence type="ECO:0000269" key="9">
    <source>
    </source>
</evidence>
<evidence type="ECO:0000269" key="10">
    <source>
    </source>
</evidence>
<evidence type="ECO:0000269" key="11">
    <source>
    </source>
</evidence>
<evidence type="ECO:0000269" key="12">
    <source>
    </source>
</evidence>
<evidence type="ECO:0000305" key="13"/>
<evidence type="ECO:0000305" key="14">
    <source>
    </source>
</evidence>
<name>PGTB1_YEAST</name>